<comment type="function">
    <text>Cell wall protein that participates directly in adhesive cell-cell interactions during yeast flocculation, a reversible, asexual and Ca(2+)-dependent process in which cells adhere to form aggregates (flocs) consisting of thousands of cells. The lectin-like protein sticks out of the cell wall of flocculent cells and selectively binds mannose residues in the cell walls of adjacent cells.</text>
</comment>
<comment type="subcellular location">
    <subcellularLocation>
        <location evidence="6">Secreted</location>
        <location evidence="6">Cell wall</location>
    </subcellularLocation>
    <subcellularLocation>
        <location evidence="5">Membrane</location>
        <topology evidence="5">Lipid-anchor</topology>
        <topology evidence="5">GPI-anchor</topology>
    </subcellularLocation>
    <text>Covalently-linked GPI-modified cell wall protein (GPI-CWP).</text>
</comment>
<comment type="domain">
    <text evidence="1">The number of the intragenic tandem repeats varies between different S.cerevisiae strains. There is a linear correlation between protein size and the extend of adhesion: the more repeats, the stronger the adhesion properties and the greater the fraction of flocculating cells (By similarity). The Ser/Thr-rich repeats are also important for proper cell wall targeting of the protein.</text>
</comment>
<comment type="PTM">
    <text evidence="1">The GPI-anchor is attached to the protein in the endoplasmic reticulum and serves to target the protein to the cell surface. There, the glucosamine-inositol phospholipid moiety is cleaved off and the GPI-modified mannoprotein is covalently attached via its lipidless GPI glycan remnant to the 1,6-beta-glucan of the outer cell wall layer (By similarity).</text>
</comment>
<comment type="similarity">
    <text evidence="5">Belongs to the flocculin family.</text>
</comment>
<accession>P39712</accession>
<accession>D6VPF6</accession>
<name>FLO9_YEAST</name>
<protein>
    <recommendedName>
        <fullName>Flocculation protein FLO9</fullName>
        <shortName>Flocculin-9</shortName>
    </recommendedName>
</protein>
<gene>
    <name type="primary">FLO9</name>
    <name type="ordered locus">YAL063C</name>
</gene>
<feature type="signal peptide" evidence="2">
    <location>
        <begin position="1"/>
        <end position="24"/>
    </location>
</feature>
<feature type="chain" id="PRO_0000021277" description="Flocculation protein FLO9">
    <location>
        <begin position="25"/>
        <end position="1299"/>
    </location>
</feature>
<feature type="propeptide" id="PRO_0000372454" description="Removed in mature form" evidence="2">
    <location>
        <begin position="1300"/>
        <end position="1322"/>
    </location>
</feature>
<feature type="domain" description="PA14" evidence="3">
    <location>
        <begin position="74"/>
        <end position="249"/>
    </location>
</feature>
<feature type="repeat" description="1-1">
    <location>
        <begin position="278"/>
        <end position="322"/>
    </location>
</feature>
<feature type="repeat" description="1-2">
    <location>
        <begin position="323"/>
        <end position="367"/>
    </location>
</feature>
<feature type="repeat" description="1-3">
    <location>
        <begin position="368"/>
        <end position="412"/>
    </location>
</feature>
<feature type="repeat" description="1-4">
    <location>
        <begin position="413"/>
        <end position="457"/>
    </location>
</feature>
<feature type="repeat" description="1-5">
    <location>
        <begin position="458"/>
        <end position="502"/>
    </location>
</feature>
<feature type="repeat" description="1-6">
    <location>
        <begin position="503"/>
        <end position="547"/>
    </location>
</feature>
<feature type="repeat" description="1-7">
    <location>
        <begin position="548"/>
        <end position="592"/>
    </location>
</feature>
<feature type="repeat" description="1-8">
    <location>
        <begin position="593"/>
        <end position="637"/>
    </location>
</feature>
<feature type="repeat" description="1-9">
    <location>
        <begin position="638"/>
        <end position="682"/>
    </location>
</feature>
<feature type="repeat" description="1-10">
    <location>
        <begin position="683"/>
        <end position="727"/>
    </location>
</feature>
<feature type="repeat" description="1-11">
    <location>
        <begin position="728"/>
        <end position="772"/>
    </location>
</feature>
<feature type="repeat" description="1-12">
    <location>
        <begin position="773"/>
        <end position="817"/>
    </location>
</feature>
<feature type="repeat" description="1-13">
    <location>
        <begin position="818"/>
        <end position="862"/>
    </location>
</feature>
<feature type="repeat" description="2-1">
    <location>
        <begin position="892"/>
        <end position="906"/>
    </location>
</feature>
<feature type="repeat" description="2-2">
    <location>
        <begin position="907"/>
        <end position="921"/>
    </location>
</feature>
<feature type="repeat" description="2-3">
    <location>
        <begin position="922"/>
        <end position="936"/>
    </location>
</feature>
<feature type="repeat" description="3-1">
    <location>
        <begin position="1013"/>
        <end position="1063"/>
    </location>
</feature>
<feature type="repeat" description="3-2">
    <location>
        <begin position="1085"/>
        <end position="1135"/>
    </location>
</feature>
<feature type="repeat" description="3-3">
    <location>
        <begin position="1136"/>
        <end position="1186"/>
    </location>
</feature>
<feature type="region of interest" description="Sugar recognition" evidence="1">
    <location>
        <begin position="197"/>
        <end position="240"/>
    </location>
</feature>
<feature type="region of interest" description="13 X 45 AA approximate tandem repeats, Thr-rich">
    <location>
        <begin position="278"/>
        <end position="862"/>
    </location>
</feature>
<feature type="region of interest" description="Disordered" evidence="4">
    <location>
        <begin position="770"/>
        <end position="799"/>
    </location>
</feature>
<feature type="region of interest" description="Disordered" evidence="4">
    <location>
        <begin position="816"/>
        <end position="843"/>
    </location>
</feature>
<feature type="region of interest" description="3 X 15 AA approximate repeats, Ser-rich">
    <location>
        <begin position="892"/>
        <end position="936"/>
    </location>
</feature>
<feature type="region of interest" description="Disordered" evidence="4">
    <location>
        <begin position="950"/>
        <end position="1018"/>
    </location>
</feature>
<feature type="region of interest" description="3 X 51 AA approximate repeats, Thr-rich">
    <location>
        <begin position="1013"/>
        <end position="1186"/>
    </location>
</feature>
<feature type="region of interest" description="Disordered" evidence="4">
    <location>
        <begin position="1186"/>
        <end position="1221"/>
    </location>
</feature>
<feature type="region of interest" description="Disordered" evidence="4">
    <location>
        <begin position="1256"/>
        <end position="1284"/>
    </location>
</feature>
<feature type="compositionally biased region" description="Low complexity" evidence="4">
    <location>
        <begin position="773"/>
        <end position="795"/>
    </location>
</feature>
<feature type="compositionally biased region" description="Low complexity" evidence="4">
    <location>
        <begin position="817"/>
        <end position="840"/>
    </location>
</feature>
<feature type="compositionally biased region" description="Low complexity" evidence="4">
    <location>
        <begin position="950"/>
        <end position="1001"/>
    </location>
</feature>
<feature type="compositionally biased region" description="Polar residues" evidence="4">
    <location>
        <begin position="1002"/>
        <end position="1018"/>
    </location>
</feature>
<feature type="compositionally biased region" description="Polar residues" evidence="4">
    <location>
        <begin position="1186"/>
        <end position="1196"/>
    </location>
</feature>
<feature type="compositionally biased region" description="Low complexity" evidence="4">
    <location>
        <begin position="1197"/>
        <end position="1221"/>
    </location>
</feature>
<feature type="compositionally biased region" description="Polar residues" evidence="4">
    <location>
        <begin position="1257"/>
        <end position="1284"/>
    </location>
</feature>
<feature type="lipid moiety-binding region" description="GPI-anchor amidated glycine" evidence="2">
    <location>
        <position position="1299"/>
    </location>
</feature>
<feature type="glycosylation site" description="N-linked (GlcNAc...) asparagine" evidence="2">
    <location>
        <position position="135"/>
    </location>
</feature>
<feature type="glycosylation site" description="N-linked (GlcNAc...) asparagine" evidence="2">
    <location>
        <position position="187"/>
    </location>
</feature>
<feature type="glycosylation site" description="N-linked (GlcNAc...) asparagine" evidence="2">
    <location>
        <position position="203"/>
    </location>
</feature>
<feature type="glycosylation site" description="N-linked (GlcNAc...) asparagine" evidence="2">
    <location>
        <position position="257"/>
    </location>
</feature>
<feature type="glycosylation site" description="N-linked (GlcNAc...) asparagine" evidence="2">
    <location>
        <position position="262"/>
    </location>
</feature>
<feature type="glycosylation site" description="N-linked (GlcNAc...) asparagine" evidence="2">
    <location>
        <position position="270"/>
    </location>
</feature>
<feature type="glycosylation site" description="N-linked (GlcNAc...) asparagine" evidence="2">
    <location>
        <position position="329"/>
    </location>
</feature>
<feature type="glycosylation site" description="N-linked (GlcNAc...) asparagine" evidence="2">
    <location>
        <position position="419"/>
    </location>
</feature>
<feature type="glycosylation site" description="N-linked (GlcNAc...) asparagine" evidence="2">
    <location>
        <position position="464"/>
    </location>
</feature>
<feature type="glycosylation site" description="N-linked (GlcNAc...) asparagine" evidence="2">
    <location>
        <position position="509"/>
    </location>
</feature>
<feature type="glycosylation site" description="N-linked (GlcNAc...) asparagine" evidence="2">
    <location>
        <position position="554"/>
    </location>
</feature>
<feature type="glycosylation site" description="N-linked (GlcNAc...) asparagine" evidence="2">
    <location>
        <position position="599"/>
    </location>
</feature>
<feature type="glycosylation site" description="N-linked (GlcNAc...) asparagine" evidence="2">
    <location>
        <position position="644"/>
    </location>
</feature>
<feature type="glycosylation site" description="N-linked (GlcNAc...) asparagine" evidence="2">
    <location>
        <position position="689"/>
    </location>
</feature>
<feature type="glycosylation site" description="N-linked (GlcNAc...) asparagine" evidence="2">
    <location>
        <position position="734"/>
    </location>
</feature>
<feature type="glycosylation site" description="N-linked (GlcNAc...) asparagine" evidence="2">
    <location>
        <position position="888"/>
    </location>
</feature>
<dbReference type="EMBL" id="U12980">
    <property type="protein sequence ID" value="AAC04971.1"/>
    <property type="molecule type" value="Genomic_DNA"/>
</dbReference>
<dbReference type="EMBL" id="BK006935">
    <property type="protein sequence ID" value="DAA06926.1"/>
    <property type="molecule type" value="Genomic_DNA"/>
</dbReference>
<dbReference type="PIR" id="S51959">
    <property type="entry name" value="S51959"/>
</dbReference>
<dbReference type="RefSeq" id="NP_009338.1">
    <property type="nucleotide sequence ID" value="NM_001178205.1"/>
</dbReference>
<dbReference type="SMR" id="P39712"/>
<dbReference type="BioGRID" id="31767">
    <property type="interactions" value="32"/>
</dbReference>
<dbReference type="FunCoup" id="P39712">
    <property type="interactions" value="58"/>
</dbReference>
<dbReference type="IntAct" id="P39712">
    <property type="interactions" value="1"/>
</dbReference>
<dbReference type="STRING" id="4932.YAL063C"/>
<dbReference type="GlyCosmos" id="P39712">
    <property type="glycosylation" value="16 sites, No reported glycans"/>
</dbReference>
<dbReference type="GlyGen" id="P39712">
    <property type="glycosylation" value="16 sites"/>
</dbReference>
<dbReference type="PaxDb" id="4932-YAL063C"/>
<dbReference type="EnsemblFungi" id="YAL063C_mRNA">
    <property type="protein sequence ID" value="YAL063C"/>
    <property type="gene ID" value="YAL063C"/>
</dbReference>
<dbReference type="GeneID" id="851236"/>
<dbReference type="KEGG" id="sce:YAL063C"/>
<dbReference type="AGR" id="SGD:S000000059"/>
<dbReference type="SGD" id="S000000059">
    <property type="gene designation" value="FLO9"/>
</dbReference>
<dbReference type="VEuPathDB" id="FungiDB:YAL063C"/>
<dbReference type="eggNOG" id="ENOG502QPQC">
    <property type="taxonomic scope" value="Eukaryota"/>
</dbReference>
<dbReference type="GeneTree" id="ENSGT00940000176342"/>
<dbReference type="HOGENOM" id="CLU_006076_0_0_1"/>
<dbReference type="InParanoid" id="P39712"/>
<dbReference type="OMA" id="DISTTTH"/>
<dbReference type="OrthoDB" id="4070698at2759"/>
<dbReference type="BioCyc" id="YEAST:G3O-28864-MONOMER"/>
<dbReference type="BioGRID-ORCS" id="851236">
    <property type="hits" value="9 hits in 10 CRISPR screens"/>
</dbReference>
<dbReference type="PRO" id="PR:P39712"/>
<dbReference type="Proteomes" id="UP000002311">
    <property type="component" value="Chromosome I"/>
</dbReference>
<dbReference type="RNAct" id="P39712">
    <property type="molecule type" value="protein"/>
</dbReference>
<dbReference type="GO" id="GO:0005576">
    <property type="term" value="C:extracellular region"/>
    <property type="evidence" value="ECO:0007669"/>
    <property type="project" value="UniProtKB-KW"/>
</dbReference>
<dbReference type="GO" id="GO:0009277">
    <property type="term" value="C:fungal-type cell wall"/>
    <property type="evidence" value="ECO:0000250"/>
    <property type="project" value="SGD"/>
</dbReference>
<dbReference type="GO" id="GO:0098552">
    <property type="term" value="C:side of membrane"/>
    <property type="evidence" value="ECO:0007669"/>
    <property type="project" value="UniProtKB-KW"/>
</dbReference>
<dbReference type="GO" id="GO:0005537">
    <property type="term" value="F:D-mannose binding"/>
    <property type="evidence" value="ECO:0000250"/>
    <property type="project" value="SGD"/>
</dbReference>
<dbReference type="GO" id="GO:0031589">
    <property type="term" value="P:cell-substrate adhesion"/>
    <property type="evidence" value="ECO:0000315"/>
    <property type="project" value="SGD"/>
</dbReference>
<dbReference type="GO" id="GO:0000128">
    <property type="term" value="P:flocculation"/>
    <property type="evidence" value="ECO:0000315"/>
    <property type="project" value="SGD"/>
</dbReference>
<dbReference type="Gene3D" id="2.60.120.1560">
    <property type="match status" value="1"/>
</dbReference>
<dbReference type="Gene3D" id="6.20.60.20">
    <property type="match status" value="1"/>
</dbReference>
<dbReference type="InterPro" id="IPR001389">
    <property type="entry name" value="Flocculin"/>
</dbReference>
<dbReference type="InterPro" id="IPR025928">
    <property type="entry name" value="Flocculin_t3_rpt"/>
</dbReference>
<dbReference type="InterPro" id="IPR037524">
    <property type="entry name" value="PA14/GLEYA"/>
</dbReference>
<dbReference type="InterPro" id="IPR011658">
    <property type="entry name" value="PA14_dom"/>
</dbReference>
<dbReference type="Pfam" id="PF00624">
    <property type="entry name" value="Flocculin"/>
    <property type="match status" value="13"/>
</dbReference>
<dbReference type="Pfam" id="PF13928">
    <property type="entry name" value="Flocculin_t3"/>
    <property type="match status" value="3"/>
</dbReference>
<dbReference type="Pfam" id="PF07691">
    <property type="entry name" value="PA14"/>
    <property type="match status" value="1"/>
</dbReference>
<dbReference type="SMART" id="SM00758">
    <property type="entry name" value="PA14"/>
    <property type="match status" value="1"/>
</dbReference>
<dbReference type="PROSITE" id="PS51820">
    <property type="entry name" value="PA14"/>
    <property type="match status" value="1"/>
</dbReference>
<proteinExistence type="inferred from homology"/>
<keyword id="KW-0134">Cell wall</keyword>
<keyword id="KW-0325">Glycoprotein</keyword>
<keyword id="KW-0336">GPI-anchor</keyword>
<keyword id="KW-0449">Lipoprotein</keyword>
<keyword id="KW-0472">Membrane</keyword>
<keyword id="KW-1185">Reference proteome</keyword>
<keyword id="KW-0677">Repeat</keyword>
<keyword id="KW-0964">Secreted</keyword>
<keyword id="KW-0732">Signal</keyword>
<evidence type="ECO:0000250" key="1"/>
<evidence type="ECO:0000255" key="2"/>
<evidence type="ECO:0000255" key="3">
    <source>
        <dbReference type="PROSITE-ProRule" id="PRU01164"/>
    </source>
</evidence>
<evidence type="ECO:0000256" key="4">
    <source>
        <dbReference type="SAM" id="MobiDB-lite"/>
    </source>
</evidence>
<evidence type="ECO:0000305" key="5"/>
<evidence type="ECO:0000305" key="6">
    <source>
    </source>
</evidence>
<sequence>MSLAHYCLLLAIVTLLGLTNVVSATTAACLPANSRKNGMNVNFYQYSLRDSSTYSNAAYMAYGYASKTKLGSVGGQTDISIDYNIPCVSSSGTFPCPQEDLYGNWGCKGIGACSNNPIIAYWSTDLFGFYTTPTNVTLEMTGYFLPPQTGSYTFKFATVDDSAILSVGGSIAFECCAQEQPPITSTNFTINGIKPWNGSPPDNITGTVYMYAGFYYPMKIVYSNAVAWGTLPISVTLPDGTTVSDDFEGYVYTFDNNLSQPNCTIPDPSNYTVSTTITTTEPWTGTFTSTSTEMTTVTGTNGVPTDETVIVIRTPTTASTIITTTEPWNSTFTSTSTELTTVTGTNGVRTDETIIVIRTPTTATTAITTTEPWNSTFTSTSTELTTVTGTNGLPTDETIIVIRTPTTATTAMTTTQPWNDTFTSTSTELTTVTGTNGLPTDETIIVIRTPTTATTAMTTTQPWNDTFTSTSTELTTVTGTNGLPTDETIIVIRTPTTATTAMTTTQPWNDTFTSTSTEITTVTGTNGLPTDETIIVIRTPTTATTAMTTTQPWNDTFTSTSTEMTTVTGTNGLPTDETIIVIRTPTTATTAITTTEPWNSTFTSTSTEMTTVTGTNGLPTDETIIVIRTPTTATTAITTTQPWNDTFTSTSTEMTTVTGTNGLPTDETIIVIRTPTTATTAMTTTQPWNDTFTSTSTEITTVTGTNGLPTDETIIVIRTPTTATTAMTTTQPWNDTFTSTSTEMTTVTGTNGVPTDETVIVIRTPTSEGLISTTTEPWTGTFTSTSTEMTTVTGTNGQPTDETVIVIRTPTSEGLVTTTTEPWTGTFTSTSTEMTTITGTNGQPTDETVIIVKTPTTAISSSLSSSSGQITSFITSARPIITPFYPSNGTSVISSSVISSSDTSSLVISSSVTSSLVTSSPVISSSFISSPVISSTTTSASILSESSKSSVIPTSSSTSGSSESETGSASSASSSSSISSESPKSTYSSSSLPPVTSATTSQEITSSLPPVTTTKTSEQTTLVTVTSCESHVCTESISSAIVSTATVTVSGATTEYTTWCPISTTEITKQTTETTKQTKGTTEQTTETTKQTTVVTISSCESDVCSKTASPAIVSTSTATINGVTTEYTTWCPISTTESKQQTTLVTVTSCGSGVCSETTSPAIVSTATATVNDVVTVYSTWRPQTTNEQSVSSKMNSATSETTTNTGAAETTTSTGAAETKTVVTSSISRFNHAETQTASATDVIGHSSSVVSVSETGNTKSLTSSGLSTMSQQPRSTPASSMVGSSTASLEISTYAGSANSLLAGSGLSVFIASLLLAII</sequence>
<reference key="1">
    <citation type="journal article" date="1995" name="Proc. Natl. Acad. Sci. U.S.A.">
        <title>The nucleotide sequence of chromosome I from Saccharomyces cerevisiae.</title>
        <authorList>
            <person name="Bussey H."/>
            <person name="Kaback D.B."/>
            <person name="Zhong W.-W."/>
            <person name="Vo D.H."/>
            <person name="Clark M.W."/>
            <person name="Fortin N."/>
            <person name="Hall J."/>
            <person name="Ouellette B.F.F."/>
            <person name="Keng T."/>
            <person name="Barton A.B."/>
            <person name="Su Y."/>
            <person name="Davies C.J."/>
            <person name="Storms R.K."/>
        </authorList>
    </citation>
    <scope>NUCLEOTIDE SEQUENCE [LARGE SCALE GENOMIC DNA]</scope>
    <source>
        <strain>ATCC 204508 / S288c</strain>
    </source>
</reference>
<reference key="2">
    <citation type="journal article" date="2014" name="G3 (Bethesda)">
        <title>The reference genome sequence of Saccharomyces cerevisiae: Then and now.</title>
        <authorList>
            <person name="Engel S.R."/>
            <person name="Dietrich F.S."/>
            <person name="Fisk D.G."/>
            <person name="Binkley G."/>
            <person name="Balakrishnan R."/>
            <person name="Costanzo M.C."/>
            <person name="Dwight S.S."/>
            <person name="Hitz B.C."/>
            <person name="Karra K."/>
            <person name="Nash R.S."/>
            <person name="Weng S."/>
            <person name="Wong E.D."/>
            <person name="Lloyd P."/>
            <person name="Skrzypek M.S."/>
            <person name="Miyasato S.R."/>
            <person name="Simison M."/>
            <person name="Cherry J.M."/>
        </authorList>
    </citation>
    <scope>GENOME REANNOTATION</scope>
    <source>
        <strain>ATCC 204508 / S288c</strain>
    </source>
</reference>
<reference key="3">
    <citation type="journal article" date="1995" name="Yeast">
        <title>Review: the dominant flocculation genes of Saccharomyces cerevisiae constitute a new subtelomeric gene family.</title>
        <authorList>
            <person name="Teunissen A.W.R.H."/>
            <person name="Steensma H.Y."/>
        </authorList>
    </citation>
    <scope>REVIEW</scope>
</reference>
<reference key="4">
    <citation type="journal article" date="2004" name="Microbiology">
        <title>Multiple sequence signals determine the distribution of glycosylphosphatidylinositol proteins between the plasma membrane and cell wall in Saccharomyces cerevisiae.</title>
        <authorList>
            <person name="Frieman M.B."/>
            <person name="Cormack B.P."/>
        </authorList>
    </citation>
    <scope>SUBCELLULAR LOCATION</scope>
    <scope>REPEATS</scope>
</reference>
<reference key="5">
    <citation type="journal article" date="2005" name="Nat. Genet.">
        <title>Intragenic tandem repeats generate functional variability.</title>
        <authorList>
            <person name="Verstrepen K.J."/>
            <person name="Jansen A."/>
            <person name="Lewitter F."/>
            <person name="Fink G.R."/>
        </authorList>
    </citation>
    <scope>REPEATS</scope>
</reference>
<organism>
    <name type="scientific">Saccharomyces cerevisiae (strain ATCC 204508 / S288c)</name>
    <name type="common">Baker's yeast</name>
    <dbReference type="NCBI Taxonomy" id="559292"/>
    <lineage>
        <taxon>Eukaryota</taxon>
        <taxon>Fungi</taxon>
        <taxon>Dikarya</taxon>
        <taxon>Ascomycota</taxon>
        <taxon>Saccharomycotina</taxon>
        <taxon>Saccharomycetes</taxon>
        <taxon>Saccharomycetales</taxon>
        <taxon>Saccharomycetaceae</taxon>
        <taxon>Saccharomyces</taxon>
    </lineage>
</organism>